<accession>Q02W24</accession>
<dbReference type="EMBL" id="CP000425">
    <property type="protein sequence ID" value="ABJ73848.1"/>
    <property type="molecule type" value="Genomic_DNA"/>
</dbReference>
<dbReference type="RefSeq" id="WP_003129973.1">
    <property type="nucleotide sequence ID" value="NC_008527.1"/>
</dbReference>
<dbReference type="SMR" id="Q02W24"/>
<dbReference type="GeneID" id="89634447"/>
<dbReference type="KEGG" id="llc:LACR_2402"/>
<dbReference type="HOGENOM" id="CLU_122625_1_3_9"/>
<dbReference type="Proteomes" id="UP000000240">
    <property type="component" value="Chromosome"/>
</dbReference>
<dbReference type="GO" id="GO:1990904">
    <property type="term" value="C:ribonucleoprotein complex"/>
    <property type="evidence" value="ECO:0007669"/>
    <property type="project" value="UniProtKB-KW"/>
</dbReference>
<dbReference type="GO" id="GO:0005840">
    <property type="term" value="C:ribosome"/>
    <property type="evidence" value="ECO:0007669"/>
    <property type="project" value="UniProtKB-KW"/>
</dbReference>
<dbReference type="GO" id="GO:0003735">
    <property type="term" value="F:structural constituent of ribosome"/>
    <property type="evidence" value="ECO:0007669"/>
    <property type="project" value="InterPro"/>
</dbReference>
<dbReference type="GO" id="GO:0000049">
    <property type="term" value="F:tRNA binding"/>
    <property type="evidence" value="ECO:0007669"/>
    <property type="project" value="UniProtKB-UniRule"/>
</dbReference>
<dbReference type="GO" id="GO:0006412">
    <property type="term" value="P:translation"/>
    <property type="evidence" value="ECO:0007669"/>
    <property type="project" value="UniProtKB-UniRule"/>
</dbReference>
<dbReference type="FunFam" id="3.30.70.600:FF:000001">
    <property type="entry name" value="30S ribosomal protein S10"/>
    <property type="match status" value="1"/>
</dbReference>
<dbReference type="Gene3D" id="3.30.70.600">
    <property type="entry name" value="Ribosomal protein S10 domain"/>
    <property type="match status" value="1"/>
</dbReference>
<dbReference type="HAMAP" id="MF_00508">
    <property type="entry name" value="Ribosomal_uS10"/>
    <property type="match status" value="1"/>
</dbReference>
<dbReference type="InterPro" id="IPR001848">
    <property type="entry name" value="Ribosomal_uS10"/>
</dbReference>
<dbReference type="InterPro" id="IPR018268">
    <property type="entry name" value="Ribosomal_uS10_CS"/>
</dbReference>
<dbReference type="InterPro" id="IPR027486">
    <property type="entry name" value="Ribosomal_uS10_dom"/>
</dbReference>
<dbReference type="InterPro" id="IPR036838">
    <property type="entry name" value="Ribosomal_uS10_dom_sf"/>
</dbReference>
<dbReference type="NCBIfam" id="NF001861">
    <property type="entry name" value="PRK00596.1"/>
    <property type="match status" value="1"/>
</dbReference>
<dbReference type="NCBIfam" id="TIGR01049">
    <property type="entry name" value="rpsJ_bact"/>
    <property type="match status" value="1"/>
</dbReference>
<dbReference type="PANTHER" id="PTHR11700">
    <property type="entry name" value="30S RIBOSOMAL PROTEIN S10 FAMILY MEMBER"/>
    <property type="match status" value="1"/>
</dbReference>
<dbReference type="Pfam" id="PF00338">
    <property type="entry name" value="Ribosomal_S10"/>
    <property type="match status" value="1"/>
</dbReference>
<dbReference type="PRINTS" id="PR00971">
    <property type="entry name" value="RIBOSOMALS10"/>
</dbReference>
<dbReference type="SMART" id="SM01403">
    <property type="entry name" value="Ribosomal_S10"/>
    <property type="match status" value="1"/>
</dbReference>
<dbReference type="SUPFAM" id="SSF54999">
    <property type="entry name" value="Ribosomal protein S10"/>
    <property type="match status" value="1"/>
</dbReference>
<dbReference type="PROSITE" id="PS00361">
    <property type="entry name" value="RIBOSOMAL_S10"/>
    <property type="match status" value="1"/>
</dbReference>
<gene>
    <name evidence="1" type="primary">rpsJ</name>
    <name type="ordered locus">LACR_2402</name>
</gene>
<evidence type="ECO:0000255" key="1">
    <source>
        <dbReference type="HAMAP-Rule" id="MF_00508"/>
    </source>
</evidence>
<evidence type="ECO:0000305" key="2"/>
<comment type="function">
    <text evidence="1">Involved in the binding of tRNA to the ribosomes.</text>
</comment>
<comment type="subunit">
    <text evidence="1">Part of the 30S ribosomal subunit.</text>
</comment>
<comment type="similarity">
    <text evidence="1">Belongs to the universal ribosomal protein uS10 family.</text>
</comment>
<feature type="chain" id="PRO_1000015042" description="Small ribosomal subunit protein uS10">
    <location>
        <begin position="1"/>
        <end position="102"/>
    </location>
</feature>
<keyword id="KW-0687">Ribonucleoprotein</keyword>
<keyword id="KW-0689">Ribosomal protein</keyword>
<organism>
    <name type="scientific">Lactococcus lactis subsp. cremoris (strain SK11)</name>
    <dbReference type="NCBI Taxonomy" id="272622"/>
    <lineage>
        <taxon>Bacteria</taxon>
        <taxon>Bacillati</taxon>
        <taxon>Bacillota</taxon>
        <taxon>Bacilli</taxon>
        <taxon>Lactobacillales</taxon>
        <taxon>Streptococcaceae</taxon>
        <taxon>Lactococcus</taxon>
        <taxon>Lactococcus cremoris subsp. cremoris</taxon>
    </lineage>
</organism>
<protein>
    <recommendedName>
        <fullName evidence="1">Small ribosomal subunit protein uS10</fullName>
    </recommendedName>
    <alternativeName>
        <fullName evidence="2">30S ribosomal protein S10</fullName>
    </alternativeName>
</protein>
<reference key="1">
    <citation type="journal article" date="2006" name="Proc. Natl. Acad. Sci. U.S.A.">
        <title>Comparative genomics of the lactic acid bacteria.</title>
        <authorList>
            <person name="Makarova K.S."/>
            <person name="Slesarev A."/>
            <person name="Wolf Y.I."/>
            <person name="Sorokin A."/>
            <person name="Mirkin B."/>
            <person name="Koonin E.V."/>
            <person name="Pavlov A."/>
            <person name="Pavlova N."/>
            <person name="Karamychev V."/>
            <person name="Polouchine N."/>
            <person name="Shakhova V."/>
            <person name="Grigoriev I."/>
            <person name="Lou Y."/>
            <person name="Rohksar D."/>
            <person name="Lucas S."/>
            <person name="Huang K."/>
            <person name="Goodstein D.M."/>
            <person name="Hawkins T."/>
            <person name="Plengvidhya V."/>
            <person name="Welker D."/>
            <person name="Hughes J."/>
            <person name="Goh Y."/>
            <person name="Benson A."/>
            <person name="Baldwin K."/>
            <person name="Lee J.-H."/>
            <person name="Diaz-Muniz I."/>
            <person name="Dosti B."/>
            <person name="Smeianov V."/>
            <person name="Wechter W."/>
            <person name="Barabote R."/>
            <person name="Lorca G."/>
            <person name="Altermann E."/>
            <person name="Barrangou R."/>
            <person name="Ganesan B."/>
            <person name="Xie Y."/>
            <person name="Rawsthorne H."/>
            <person name="Tamir D."/>
            <person name="Parker C."/>
            <person name="Breidt F."/>
            <person name="Broadbent J.R."/>
            <person name="Hutkins R."/>
            <person name="O'Sullivan D."/>
            <person name="Steele J."/>
            <person name="Unlu G."/>
            <person name="Saier M.H. Jr."/>
            <person name="Klaenhammer T."/>
            <person name="Richardson P."/>
            <person name="Kozyavkin S."/>
            <person name="Weimer B.C."/>
            <person name="Mills D.A."/>
        </authorList>
    </citation>
    <scope>NUCLEOTIDE SEQUENCE [LARGE SCALE GENOMIC DNA]</scope>
    <source>
        <strain>SK11</strain>
    </source>
</reference>
<proteinExistence type="inferred from homology"/>
<sequence>MATKKIRIRLKAYEHRILDAAAEKIVETAKRTNAEVSGPIPLPTDRSVYTVIRATHKYKDSREQFEMRTHKRLIDIIEPTQKTVDSLMKLDLPSGVNIEIKL</sequence>
<name>RS10_LACLS</name>